<reference key="1">
    <citation type="journal article" date="2010" name="Genome Biol.">
        <title>Structure and dynamics of the pan-genome of Streptococcus pneumoniae and closely related species.</title>
        <authorList>
            <person name="Donati C."/>
            <person name="Hiller N.L."/>
            <person name="Tettelin H."/>
            <person name="Muzzi A."/>
            <person name="Croucher N.J."/>
            <person name="Angiuoli S.V."/>
            <person name="Oggioni M."/>
            <person name="Dunning Hotopp J.C."/>
            <person name="Hu F.Z."/>
            <person name="Riley D.R."/>
            <person name="Covacci A."/>
            <person name="Mitchell T.J."/>
            <person name="Bentley S.D."/>
            <person name="Kilian M."/>
            <person name="Ehrlich G.D."/>
            <person name="Rappuoli R."/>
            <person name="Moxon E.R."/>
            <person name="Masignani V."/>
        </authorList>
    </citation>
    <scope>NUCLEOTIDE SEQUENCE [LARGE SCALE GENOMIC DNA]</scope>
    <source>
        <strain>Hungary19A-6</strain>
    </source>
</reference>
<dbReference type="EC" id="6.3.2.9" evidence="1"/>
<dbReference type="EMBL" id="CP000936">
    <property type="protein sequence ID" value="ACA36235.1"/>
    <property type="molecule type" value="Genomic_DNA"/>
</dbReference>
<dbReference type="RefSeq" id="WP_000863035.1">
    <property type="nucleotide sequence ID" value="NC_010380.1"/>
</dbReference>
<dbReference type="SMR" id="B1IAM3"/>
<dbReference type="KEGG" id="spv:SPH_0782"/>
<dbReference type="HOGENOM" id="CLU_032540_0_1_9"/>
<dbReference type="UniPathway" id="UPA00219"/>
<dbReference type="Proteomes" id="UP000002163">
    <property type="component" value="Chromosome"/>
</dbReference>
<dbReference type="GO" id="GO:0005737">
    <property type="term" value="C:cytoplasm"/>
    <property type="evidence" value="ECO:0007669"/>
    <property type="project" value="UniProtKB-SubCell"/>
</dbReference>
<dbReference type="GO" id="GO:0005524">
    <property type="term" value="F:ATP binding"/>
    <property type="evidence" value="ECO:0007669"/>
    <property type="project" value="UniProtKB-UniRule"/>
</dbReference>
<dbReference type="GO" id="GO:0008764">
    <property type="term" value="F:UDP-N-acetylmuramoylalanine-D-glutamate ligase activity"/>
    <property type="evidence" value="ECO:0007669"/>
    <property type="project" value="UniProtKB-UniRule"/>
</dbReference>
<dbReference type="GO" id="GO:0051301">
    <property type="term" value="P:cell division"/>
    <property type="evidence" value="ECO:0007669"/>
    <property type="project" value="UniProtKB-KW"/>
</dbReference>
<dbReference type="GO" id="GO:0071555">
    <property type="term" value="P:cell wall organization"/>
    <property type="evidence" value="ECO:0007669"/>
    <property type="project" value="UniProtKB-KW"/>
</dbReference>
<dbReference type="GO" id="GO:0009252">
    <property type="term" value="P:peptidoglycan biosynthetic process"/>
    <property type="evidence" value="ECO:0007669"/>
    <property type="project" value="UniProtKB-UniRule"/>
</dbReference>
<dbReference type="GO" id="GO:0008360">
    <property type="term" value="P:regulation of cell shape"/>
    <property type="evidence" value="ECO:0007669"/>
    <property type="project" value="UniProtKB-KW"/>
</dbReference>
<dbReference type="Gene3D" id="3.90.190.20">
    <property type="entry name" value="Mur ligase, C-terminal domain"/>
    <property type="match status" value="1"/>
</dbReference>
<dbReference type="Gene3D" id="3.40.1190.10">
    <property type="entry name" value="Mur-like, catalytic domain"/>
    <property type="match status" value="1"/>
</dbReference>
<dbReference type="Gene3D" id="3.40.50.720">
    <property type="entry name" value="NAD(P)-binding Rossmann-like Domain"/>
    <property type="match status" value="1"/>
</dbReference>
<dbReference type="HAMAP" id="MF_00639">
    <property type="entry name" value="MurD"/>
    <property type="match status" value="1"/>
</dbReference>
<dbReference type="InterPro" id="IPR036565">
    <property type="entry name" value="Mur-like_cat_sf"/>
</dbReference>
<dbReference type="InterPro" id="IPR004101">
    <property type="entry name" value="Mur_ligase_C"/>
</dbReference>
<dbReference type="InterPro" id="IPR036615">
    <property type="entry name" value="Mur_ligase_C_dom_sf"/>
</dbReference>
<dbReference type="InterPro" id="IPR013221">
    <property type="entry name" value="Mur_ligase_cen"/>
</dbReference>
<dbReference type="InterPro" id="IPR005762">
    <property type="entry name" value="MurD"/>
</dbReference>
<dbReference type="NCBIfam" id="TIGR01087">
    <property type="entry name" value="murD"/>
    <property type="match status" value="1"/>
</dbReference>
<dbReference type="PANTHER" id="PTHR43692">
    <property type="entry name" value="UDP-N-ACETYLMURAMOYLALANINE--D-GLUTAMATE LIGASE"/>
    <property type="match status" value="1"/>
</dbReference>
<dbReference type="PANTHER" id="PTHR43692:SF1">
    <property type="entry name" value="UDP-N-ACETYLMURAMOYLALANINE--D-GLUTAMATE LIGASE"/>
    <property type="match status" value="1"/>
</dbReference>
<dbReference type="Pfam" id="PF02875">
    <property type="entry name" value="Mur_ligase_C"/>
    <property type="match status" value="1"/>
</dbReference>
<dbReference type="Pfam" id="PF08245">
    <property type="entry name" value="Mur_ligase_M"/>
    <property type="match status" value="1"/>
</dbReference>
<dbReference type="Pfam" id="PF21799">
    <property type="entry name" value="MurD-like_N"/>
    <property type="match status" value="1"/>
</dbReference>
<dbReference type="SUPFAM" id="SSF51984">
    <property type="entry name" value="MurCD N-terminal domain"/>
    <property type="match status" value="1"/>
</dbReference>
<dbReference type="SUPFAM" id="SSF53623">
    <property type="entry name" value="MurD-like peptide ligases, catalytic domain"/>
    <property type="match status" value="1"/>
</dbReference>
<dbReference type="SUPFAM" id="SSF53244">
    <property type="entry name" value="MurD-like peptide ligases, peptide-binding domain"/>
    <property type="match status" value="1"/>
</dbReference>
<organism>
    <name type="scientific">Streptococcus pneumoniae (strain Hungary19A-6)</name>
    <dbReference type="NCBI Taxonomy" id="487214"/>
    <lineage>
        <taxon>Bacteria</taxon>
        <taxon>Bacillati</taxon>
        <taxon>Bacillota</taxon>
        <taxon>Bacilli</taxon>
        <taxon>Lactobacillales</taxon>
        <taxon>Streptococcaceae</taxon>
        <taxon>Streptococcus</taxon>
    </lineage>
</organism>
<gene>
    <name evidence="1" type="primary">murD</name>
    <name type="ordered locus">SPH_0782</name>
</gene>
<keyword id="KW-0067">ATP-binding</keyword>
<keyword id="KW-0131">Cell cycle</keyword>
<keyword id="KW-0132">Cell division</keyword>
<keyword id="KW-0133">Cell shape</keyword>
<keyword id="KW-0961">Cell wall biogenesis/degradation</keyword>
<keyword id="KW-0963">Cytoplasm</keyword>
<keyword id="KW-0436">Ligase</keyword>
<keyword id="KW-0547">Nucleotide-binding</keyword>
<keyword id="KW-0573">Peptidoglycan synthesis</keyword>
<proteinExistence type="inferred from homology"/>
<protein>
    <recommendedName>
        <fullName evidence="1">UDP-N-acetylmuramoylalanine--D-glutamate ligase</fullName>
        <ecNumber evidence="1">6.3.2.9</ecNumber>
    </recommendedName>
    <alternativeName>
        <fullName evidence="1">D-glutamic acid-adding enzyme</fullName>
    </alternativeName>
    <alternativeName>
        <fullName evidence="1">UDP-N-acetylmuramoyl-L-alanyl-D-glutamate synthetase</fullName>
    </alternativeName>
</protein>
<accession>B1IAM3</accession>
<evidence type="ECO:0000255" key="1">
    <source>
        <dbReference type="HAMAP-Rule" id="MF_00639"/>
    </source>
</evidence>
<sequence length="450" mass="48506">MKVIDQFKNKKVLVLGLAKSGESAARLLDKLGAIVTVNDGKPFEDNPAAQSLLEEGIKVITGGHPLELLDEEFALMVKNPGIPYNNPMIEKALAKGIPVLTEVELAYLISEAPIIGITGSNGKTTTTTMIGEVLTAAGQHGLLSGNIGYPASQVAQIASDKDTLVMELSSFQLMGVQEFHPEIAVITNLMPTHIDYHGSFSEYVAAKWNIQNKMTAADFLVLNFNQDLAKDLTSKTEATVIPFSTLEKVDGAYLEDGQLYFRGEVVMAANEIGVPGSHNVENALATIAVAKLRDVDNQTIKETLSAFGGVKHRLQFVDDIKGVKFYNDSKSTNILATQKALSGFDNSKVVLIAGGLDRGNEFDELVPDITGLKKMVILGQSAERVKRAADKAGVAYVEATDIADATRKAYELAIQGDVVLLSPANASWDMYANFEVRGDLFIDTVAELKE</sequence>
<name>MURD_STRPI</name>
<comment type="function">
    <text evidence="1">Cell wall formation. Catalyzes the addition of glutamate to the nucleotide precursor UDP-N-acetylmuramoyl-L-alanine (UMA).</text>
</comment>
<comment type="catalytic activity">
    <reaction evidence="1">
        <text>UDP-N-acetyl-alpha-D-muramoyl-L-alanine + D-glutamate + ATP = UDP-N-acetyl-alpha-D-muramoyl-L-alanyl-D-glutamate + ADP + phosphate + H(+)</text>
        <dbReference type="Rhea" id="RHEA:16429"/>
        <dbReference type="ChEBI" id="CHEBI:15378"/>
        <dbReference type="ChEBI" id="CHEBI:29986"/>
        <dbReference type="ChEBI" id="CHEBI:30616"/>
        <dbReference type="ChEBI" id="CHEBI:43474"/>
        <dbReference type="ChEBI" id="CHEBI:83898"/>
        <dbReference type="ChEBI" id="CHEBI:83900"/>
        <dbReference type="ChEBI" id="CHEBI:456216"/>
        <dbReference type="EC" id="6.3.2.9"/>
    </reaction>
</comment>
<comment type="pathway">
    <text evidence="1">Cell wall biogenesis; peptidoglycan biosynthesis.</text>
</comment>
<comment type="subcellular location">
    <subcellularLocation>
        <location evidence="1">Cytoplasm</location>
    </subcellularLocation>
</comment>
<comment type="similarity">
    <text evidence="1">Belongs to the MurCDEF family.</text>
</comment>
<feature type="chain" id="PRO_1000130875" description="UDP-N-acetylmuramoylalanine--D-glutamate ligase">
    <location>
        <begin position="1"/>
        <end position="450"/>
    </location>
</feature>
<feature type="binding site" evidence="1">
    <location>
        <begin position="119"/>
        <end position="125"/>
    </location>
    <ligand>
        <name>ATP</name>
        <dbReference type="ChEBI" id="CHEBI:30616"/>
    </ligand>
</feature>